<name>MOAC_YERPY</name>
<gene>
    <name evidence="1" type="primary">moaC</name>
    <name type="ordered locus">YPK_2921</name>
</gene>
<organism>
    <name type="scientific">Yersinia pseudotuberculosis serotype O:3 (strain YPIII)</name>
    <dbReference type="NCBI Taxonomy" id="502800"/>
    <lineage>
        <taxon>Bacteria</taxon>
        <taxon>Pseudomonadati</taxon>
        <taxon>Pseudomonadota</taxon>
        <taxon>Gammaproteobacteria</taxon>
        <taxon>Enterobacterales</taxon>
        <taxon>Yersiniaceae</taxon>
        <taxon>Yersinia</taxon>
    </lineage>
</organism>
<sequence length="159" mass="17197">MTQLTHINTAGEAHMVDVSAKNETAREARAEAFVDMQAATLAMIIDGSHHKGDVFATARIAGIQAAKKTWELIPLCHPLLLTKVEVKLEAQPEHNRVRIETCCRLTGKTGVEMEALTAASVAALTIYDMCKAVQKDMIIGPVRLLTKSGGKSGDFKVDI</sequence>
<reference key="1">
    <citation type="submission" date="2008-02" db="EMBL/GenBank/DDBJ databases">
        <title>Complete sequence of Yersinia pseudotuberculosis YPIII.</title>
        <authorList>
            <consortium name="US DOE Joint Genome Institute"/>
            <person name="Copeland A."/>
            <person name="Lucas S."/>
            <person name="Lapidus A."/>
            <person name="Glavina del Rio T."/>
            <person name="Dalin E."/>
            <person name="Tice H."/>
            <person name="Bruce D."/>
            <person name="Goodwin L."/>
            <person name="Pitluck S."/>
            <person name="Munk A.C."/>
            <person name="Brettin T."/>
            <person name="Detter J.C."/>
            <person name="Han C."/>
            <person name="Tapia R."/>
            <person name="Schmutz J."/>
            <person name="Larimer F."/>
            <person name="Land M."/>
            <person name="Hauser L."/>
            <person name="Challacombe J.F."/>
            <person name="Green L."/>
            <person name="Lindler L.E."/>
            <person name="Nikolich M.P."/>
            <person name="Richardson P."/>
        </authorList>
    </citation>
    <scope>NUCLEOTIDE SEQUENCE [LARGE SCALE GENOMIC DNA]</scope>
    <source>
        <strain>YPIII</strain>
    </source>
</reference>
<protein>
    <recommendedName>
        <fullName evidence="1">Cyclic pyranopterin monophosphate synthase</fullName>
        <ecNumber evidence="1">4.6.1.17</ecNumber>
    </recommendedName>
    <alternativeName>
        <fullName evidence="1">Molybdenum cofactor biosynthesis protein C</fullName>
    </alternativeName>
</protein>
<comment type="function">
    <text evidence="1">Catalyzes the conversion of (8S)-3',8-cyclo-7,8-dihydroguanosine 5'-triphosphate to cyclic pyranopterin monophosphate (cPMP).</text>
</comment>
<comment type="catalytic activity">
    <reaction evidence="1">
        <text>(8S)-3',8-cyclo-7,8-dihydroguanosine 5'-triphosphate = cyclic pyranopterin phosphate + diphosphate</text>
        <dbReference type="Rhea" id="RHEA:49580"/>
        <dbReference type="ChEBI" id="CHEBI:33019"/>
        <dbReference type="ChEBI" id="CHEBI:59648"/>
        <dbReference type="ChEBI" id="CHEBI:131766"/>
        <dbReference type="EC" id="4.6.1.17"/>
    </reaction>
</comment>
<comment type="pathway">
    <text evidence="1">Cofactor biosynthesis; molybdopterin biosynthesis.</text>
</comment>
<comment type="subunit">
    <text evidence="1">Homohexamer; trimer of dimers.</text>
</comment>
<comment type="similarity">
    <text evidence="1">Belongs to the MoaC family.</text>
</comment>
<evidence type="ECO:0000255" key="1">
    <source>
        <dbReference type="HAMAP-Rule" id="MF_01224"/>
    </source>
</evidence>
<accession>B1JSR4</accession>
<proteinExistence type="inferred from homology"/>
<feature type="chain" id="PRO_1000139311" description="Cyclic pyranopterin monophosphate synthase">
    <location>
        <begin position="1"/>
        <end position="159"/>
    </location>
</feature>
<feature type="active site" evidence="1">
    <location>
        <position position="128"/>
    </location>
</feature>
<feature type="binding site" evidence="1">
    <location>
        <begin position="75"/>
        <end position="77"/>
    </location>
    <ligand>
        <name>substrate</name>
    </ligand>
</feature>
<feature type="binding site" evidence="1">
    <location>
        <begin position="113"/>
        <end position="114"/>
    </location>
    <ligand>
        <name>substrate</name>
    </ligand>
</feature>
<keyword id="KW-0456">Lyase</keyword>
<keyword id="KW-0501">Molybdenum cofactor biosynthesis</keyword>
<dbReference type="EC" id="4.6.1.17" evidence="1"/>
<dbReference type="EMBL" id="CP000950">
    <property type="protein sequence ID" value="ACA69195.1"/>
    <property type="molecule type" value="Genomic_DNA"/>
</dbReference>
<dbReference type="RefSeq" id="WP_012304373.1">
    <property type="nucleotide sequence ID" value="NZ_CP009792.1"/>
</dbReference>
<dbReference type="SMR" id="B1JSR4"/>
<dbReference type="KEGG" id="ypy:YPK_2921"/>
<dbReference type="PATRIC" id="fig|502800.11.peg.3642"/>
<dbReference type="UniPathway" id="UPA00344"/>
<dbReference type="GO" id="GO:0061799">
    <property type="term" value="F:cyclic pyranopterin monophosphate synthase activity"/>
    <property type="evidence" value="ECO:0007669"/>
    <property type="project" value="UniProtKB-UniRule"/>
</dbReference>
<dbReference type="GO" id="GO:0006777">
    <property type="term" value="P:Mo-molybdopterin cofactor biosynthetic process"/>
    <property type="evidence" value="ECO:0007669"/>
    <property type="project" value="UniProtKB-UniRule"/>
</dbReference>
<dbReference type="CDD" id="cd01420">
    <property type="entry name" value="MoaC_PE"/>
    <property type="match status" value="1"/>
</dbReference>
<dbReference type="FunFam" id="3.30.70.640:FF:000001">
    <property type="entry name" value="Cyclic pyranopterin monophosphate synthase"/>
    <property type="match status" value="1"/>
</dbReference>
<dbReference type="Gene3D" id="3.30.70.640">
    <property type="entry name" value="Molybdopterin cofactor biosynthesis C (MoaC) domain"/>
    <property type="match status" value="1"/>
</dbReference>
<dbReference type="HAMAP" id="MF_01224_B">
    <property type="entry name" value="MoaC_B"/>
    <property type="match status" value="1"/>
</dbReference>
<dbReference type="InterPro" id="IPR023045">
    <property type="entry name" value="MoaC"/>
</dbReference>
<dbReference type="InterPro" id="IPR047594">
    <property type="entry name" value="MoaC_bact/euk"/>
</dbReference>
<dbReference type="InterPro" id="IPR036522">
    <property type="entry name" value="MoaC_sf"/>
</dbReference>
<dbReference type="InterPro" id="IPR050105">
    <property type="entry name" value="MoCo_biosynth_MoaA/MoaC"/>
</dbReference>
<dbReference type="InterPro" id="IPR002820">
    <property type="entry name" value="Mopterin_CF_biosynth-C_dom"/>
</dbReference>
<dbReference type="NCBIfam" id="TIGR00581">
    <property type="entry name" value="moaC"/>
    <property type="match status" value="1"/>
</dbReference>
<dbReference type="NCBIfam" id="NF006870">
    <property type="entry name" value="PRK09364.1"/>
    <property type="match status" value="1"/>
</dbReference>
<dbReference type="PANTHER" id="PTHR22960">
    <property type="entry name" value="MOLYBDOPTERIN COFACTOR SYNTHESIS PROTEIN A"/>
    <property type="match status" value="1"/>
</dbReference>
<dbReference type="Pfam" id="PF01967">
    <property type="entry name" value="MoaC"/>
    <property type="match status" value="1"/>
</dbReference>
<dbReference type="SUPFAM" id="SSF55040">
    <property type="entry name" value="Molybdenum cofactor biosynthesis protein C, MoaC"/>
    <property type="match status" value="1"/>
</dbReference>